<accession>Q32JT1</accession>
<dbReference type="EMBL" id="CP000034">
    <property type="protein sequence ID" value="ABB60426.1"/>
    <property type="molecule type" value="Genomic_DNA"/>
</dbReference>
<dbReference type="RefSeq" id="WP_000758956.1">
    <property type="nucleotide sequence ID" value="NC_007606.1"/>
</dbReference>
<dbReference type="RefSeq" id="YP_401915.1">
    <property type="nucleotide sequence ID" value="NC_007606.1"/>
</dbReference>
<dbReference type="SMR" id="Q32JT1"/>
<dbReference type="STRING" id="300267.SDY_0194"/>
<dbReference type="EnsemblBacteria" id="ABB60426">
    <property type="protein sequence ID" value="ABB60426"/>
    <property type="gene ID" value="SDY_0194"/>
</dbReference>
<dbReference type="GeneID" id="93777247"/>
<dbReference type="KEGG" id="sdy:SDY_0194"/>
<dbReference type="PATRIC" id="fig|300267.13.peg.225"/>
<dbReference type="HOGENOM" id="CLU_101388_2_0_6"/>
<dbReference type="Proteomes" id="UP000002716">
    <property type="component" value="Chromosome"/>
</dbReference>
<dbReference type="GO" id="GO:0005829">
    <property type="term" value="C:cytosol"/>
    <property type="evidence" value="ECO:0007669"/>
    <property type="project" value="TreeGrafter"/>
</dbReference>
<dbReference type="GO" id="GO:0042597">
    <property type="term" value="C:periplasmic space"/>
    <property type="evidence" value="ECO:0007669"/>
    <property type="project" value="UniProtKB-SubCell"/>
</dbReference>
<dbReference type="GO" id="GO:0051082">
    <property type="term" value="F:unfolded protein binding"/>
    <property type="evidence" value="ECO:0007669"/>
    <property type="project" value="InterPro"/>
</dbReference>
<dbReference type="GO" id="GO:0061077">
    <property type="term" value="P:chaperone-mediated protein folding"/>
    <property type="evidence" value="ECO:0007669"/>
    <property type="project" value="TreeGrafter"/>
</dbReference>
<dbReference type="GO" id="GO:0050821">
    <property type="term" value="P:protein stabilization"/>
    <property type="evidence" value="ECO:0007669"/>
    <property type="project" value="TreeGrafter"/>
</dbReference>
<dbReference type="FunFam" id="3.30.910.20:FF:000001">
    <property type="entry name" value="Molecular chaperone Skp"/>
    <property type="match status" value="1"/>
</dbReference>
<dbReference type="Gene3D" id="3.30.910.20">
    <property type="entry name" value="Skp domain"/>
    <property type="match status" value="1"/>
</dbReference>
<dbReference type="InterPro" id="IPR005632">
    <property type="entry name" value="Chaperone_Skp"/>
</dbReference>
<dbReference type="InterPro" id="IPR024930">
    <property type="entry name" value="Skp_dom_sf"/>
</dbReference>
<dbReference type="NCBIfam" id="NF008047">
    <property type="entry name" value="PRK10780.1"/>
    <property type="match status" value="1"/>
</dbReference>
<dbReference type="PANTHER" id="PTHR35089">
    <property type="entry name" value="CHAPERONE PROTEIN SKP"/>
    <property type="match status" value="1"/>
</dbReference>
<dbReference type="PANTHER" id="PTHR35089:SF1">
    <property type="entry name" value="CHAPERONE PROTEIN SKP"/>
    <property type="match status" value="1"/>
</dbReference>
<dbReference type="Pfam" id="PF03938">
    <property type="entry name" value="OmpH"/>
    <property type="match status" value="1"/>
</dbReference>
<dbReference type="PIRSF" id="PIRSF002094">
    <property type="entry name" value="OMP26_Skp"/>
    <property type="match status" value="1"/>
</dbReference>
<dbReference type="SMART" id="SM00935">
    <property type="entry name" value="OmpH"/>
    <property type="match status" value="1"/>
</dbReference>
<dbReference type="SUPFAM" id="SSF111384">
    <property type="entry name" value="OmpH-like"/>
    <property type="match status" value="1"/>
</dbReference>
<name>SKP_SHIDS</name>
<protein>
    <recommendedName>
        <fullName>Chaperone protein Skp</fullName>
    </recommendedName>
</protein>
<feature type="signal peptide" evidence="1">
    <location>
        <begin position="1"/>
        <end position="20"/>
    </location>
</feature>
<feature type="chain" id="PRO_0000227894" description="Chaperone protein Skp">
    <location>
        <begin position="21"/>
        <end position="161"/>
    </location>
</feature>
<feature type="region of interest" description="Lipopolysaccharide binding" evidence="2">
    <location>
        <begin position="97"/>
        <end position="108"/>
    </location>
</feature>
<evidence type="ECO:0000250" key="1"/>
<evidence type="ECO:0000255" key="2"/>
<evidence type="ECO:0000305" key="3"/>
<gene>
    <name type="primary">skp</name>
    <name type="ordered locus">SDY_0194</name>
</gene>
<keyword id="KW-0143">Chaperone</keyword>
<keyword id="KW-0574">Periplasm</keyword>
<keyword id="KW-1185">Reference proteome</keyword>
<keyword id="KW-0732">Signal</keyword>
<proteinExistence type="inferred from homology"/>
<organism>
    <name type="scientific">Shigella dysenteriae serotype 1 (strain Sd197)</name>
    <dbReference type="NCBI Taxonomy" id="300267"/>
    <lineage>
        <taxon>Bacteria</taxon>
        <taxon>Pseudomonadati</taxon>
        <taxon>Pseudomonadota</taxon>
        <taxon>Gammaproteobacteria</taxon>
        <taxon>Enterobacterales</taxon>
        <taxon>Enterobacteriaceae</taxon>
        <taxon>Shigella</taxon>
    </lineage>
</organism>
<comment type="function">
    <text evidence="1">Molecular chaperone that interacts specifically with outer membrane proteins, thus maintaining the solubility of early folding intermediates during passage through the periplasm.</text>
</comment>
<comment type="subunit">
    <text evidence="1">Homotrimer.</text>
</comment>
<comment type="subcellular location">
    <subcellularLocation>
        <location evidence="1">Periplasm</location>
    </subcellularLocation>
</comment>
<comment type="similarity">
    <text evidence="3">Belongs to the Skp family.</text>
</comment>
<sequence length="161" mass="17688">MKKWLLAAGLGLALATSAQAADKIAIVNMGSLFQQVAQKTGVSNTLENEFKGRASELQRMETDLQAKMKKLQSMKAGSDRTKLEKDVMAQRQTFAQKAQAFEQDRARRSNEERGKLVTRIQTAVKSVANSQDIDLVVDANAVAYNSSDVKDITADVLKQVK</sequence>
<reference key="1">
    <citation type="journal article" date="2005" name="Nucleic Acids Res.">
        <title>Genome dynamics and diversity of Shigella species, the etiologic agents of bacillary dysentery.</title>
        <authorList>
            <person name="Yang F."/>
            <person name="Yang J."/>
            <person name="Zhang X."/>
            <person name="Chen L."/>
            <person name="Jiang Y."/>
            <person name="Yan Y."/>
            <person name="Tang X."/>
            <person name="Wang J."/>
            <person name="Xiong Z."/>
            <person name="Dong J."/>
            <person name="Xue Y."/>
            <person name="Zhu Y."/>
            <person name="Xu X."/>
            <person name="Sun L."/>
            <person name="Chen S."/>
            <person name="Nie H."/>
            <person name="Peng J."/>
            <person name="Xu J."/>
            <person name="Wang Y."/>
            <person name="Yuan Z."/>
            <person name="Wen Y."/>
            <person name="Yao Z."/>
            <person name="Shen Y."/>
            <person name="Qiang B."/>
            <person name="Hou Y."/>
            <person name="Yu J."/>
            <person name="Jin Q."/>
        </authorList>
    </citation>
    <scope>NUCLEOTIDE SEQUENCE [LARGE SCALE GENOMIC DNA]</scope>
    <source>
        <strain>Sd197</strain>
    </source>
</reference>